<protein>
    <recommendedName>
        <fullName>Uncharacterized protein y4jH</fullName>
    </recommendedName>
</protein>
<gene>
    <name type="ordered locus">NGR_a03070</name>
    <name type="ORF">y4jH</name>
</gene>
<feature type="chain" id="PRO_0000200874" description="Uncharacterized protein y4jH">
    <location>
        <begin position="1"/>
        <end position="205"/>
    </location>
</feature>
<geneLocation type="plasmid">
    <name>sym pNGR234a</name>
</geneLocation>
<dbReference type="EMBL" id="U00090">
    <property type="protein sequence ID" value="AAB91720.1"/>
    <property type="molecule type" value="Genomic_DNA"/>
</dbReference>
<dbReference type="RefSeq" id="NP_443918.1">
    <property type="nucleotide sequence ID" value="NC_000914.2"/>
</dbReference>
<dbReference type="RefSeq" id="WP_010875328.1">
    <property type="nucleotide sequence ID" value="NC_000914.2"/>
</dbReference>
<dbReference type="SMR" id="P55508"/>
<dbReference type="KEGG" id="rhi:NGR_a03070"/>
<dbReference type="eggNOG" id="ENOG5030FGF">
    <property type="taxonomic scope" value="Bacteria"/>
</dbReference>
<dbReference type="HOGENOM" id="CLU_1336620_0_0_5"/>
<dbReference type="OrthoDB" id="9804396at2"/>
<dbReference type="Proteomes" id="UP000001054">
    <property type="component" value="Plasmid pNGR234a"/>
</dbReference>
<dbReference type="InterPro" id="IPR025873">
    <property type="entry name" value="Metal-bd_dom_prd"/>
</dbReference>
<dbReference type="Pfam" id="PF14455">
    <property type="entry name" value="Metal_CEHH"/>
    <property type="match status" value="1"/>
</dbReference>
<name>Y4JH_SINFN</name>
<sequence>MPELQTVDPKVSRAKFDREISRFRAYADAYRMQGCFLIEESFPSAFFIFASPKVKPRVIGAAIEIDFTNYDLRPLSVVFVDPFTRQPIARKDLPLNMLRRPQLPGTPTEMISNLIQQNAVSLTDFIQANSLEDQPFLCMAGVREYHDNPAHSGDPWLLHRGSGEGCLAFILDKIIKYGTGPAEQLQIHLQVALGGLLVPPQAIPE</sequence>
<keyword id="KW-0614">Plasmid</keyword>
<keyword id="KW-1185">Reference proteome</keyword>
<organism>
    <name type="scientific">Sinorhizobium fredii (strain NBRC 101917 / NGR234)</name>
    <dbReference type="NCBI Taxonomy" id="394"/>
    <lineage>
        <taxon>Bacteria</taxon>
        <taxon>Pseudomonadati</taxon>
        <taxon>Pseudomonadota</taxon>
        <taxon>Alphaproteobacteria</taxon>
        <taxon>Hyphomicrobiales</taxon>
        <taxon>Rhizobiaceae</taxon>
        <taxon>Sinorhizobium/Ensifer group</taxon>
        <taxon>Sinorhizobium</taxon>
    </lineage>
</organism>
<reference key="1">
    <citation type="journal article" date="1997" name="Nature">
        <title>Molecular basis of symbiosis between Rhizobium and legumes.</title>
        <authorList>
            <person name="Freiberg C.A."/>
            <person name="Fellay R."/>
            <person name="Bairoch A."/>
            <person name="Broughton W.J."/>
            <person name="Rosenthal A."/>
            <person name="Perret X."/>
        </authorList>
    </citation>
    <scope>NUCLEOTIDE SEQUENCE [LARGE SCALE GENOMIC DNA]</scope>
    <source>
        <strain>NBRC 101917 / NGR234</strain>
    </source>
</reference>
<reference key="2">
    <citation type="journal article" date="2009" name="Appl. Environ. Microbiol.">
        <title>Rhizobium sp. strain NGR234 possesses a remarkable number of secretion systems.</title>
        <authorList>
            <person name="Schmeisser C."/>
            <person name="Liesegang H."/>
            <person name="Krysciak D."/>
            <person name="Bakkou N."/>
            <person name="Le Quere A."/>
            <person name="Wollherr A."/>
            <person name="Heinemeyer I."/>
            <person name="Morgenstern B."/>
            <person name="Pommerening-Roeser A."/>
            <person name="Flores M."/>
            <person name="Palacios R."/>
            <person name="Brenner S."/>
            <person name="Gottschalk G."/>
            <person name="Schmitz R.A."/>
            <person name="Broughton W.J."/>
            <person name="Perret X."/>
            <person name="Strittmatter A.W."/>
            <person name="Streit W.R."/>
        </authorList>
    </citation>
    <scope>NUCLEOTIDE SEQUENCE [LARGE SCALE GENOMIC DNA]</scope>
    <source>
        <strain>NBRC 101917 / NGR234</strain>
    </source>
</reference>
<accession>P55508</accession>
<proteinExistence type="predicted"/>